<reference key="1">
    <citation type="journal article" date="1999" name="Gene">
        <title>Salpalpha and Salpbeta, growth-arresting homologs of Sam68.</title>
        <authorList>
            <person name="Lee J.-S."/>
            <person name="Burr J.G."/>
        </authorList>
    </citation>
    <scope>NUCLEOTIDE SEQUENCE [MRNA] (ISOFORM 1)</scope>
    <scope>NUCLEOTIDE SEQUENCE [MRNA] OF 8-346 (ISOFORM 2)</scope>
    <scope>FUNCTION</scope>
    <scope>TISSUE SPECIFICITY</scope>
    <scope>INTERACTION WITH P85 SUBUNIT OF PI3-KINASE</scope>
    <scope>PHOSPHORYLATION</scope>
    <source>
        <tissue>Retina</tissue>
    </source>
</reference>
<reference key="2">
    <citation type="journal article" date="1999" name="Hum. Mol. Genet.">
        <title>T-STAR/ETOILE: a novel relative of SAM68 that interacts with an RNA-binding protein implicated in spermatogenesis.</title>
        <authorList>
            <person name="Venables J.P."/>
            <person name="Vernet C."/>
            <person name="Chew S.L."/>
            <person name="Elliott D.J."/>
            <person name="Cowmeadow R.B."/>
            <person name="Wu J."/>
            <person name="Cooke H.J."/>
            <person name="Artzt K."/>
            <person name="Eperon I.C."/>
        </authorList>
    </citation>
    <scope>NUCLEOTIDE SEQUENCE [MRNA] (ISOFORM 1)</scope>
    <scope>INTERACTION WITH KHDRBS1 AND RBMX</scope>
    <scope>TISSUE SPECIFICITY</scope>
    <scope>SUBCELLULAR LOCATION</scope>
    <source>
        <tissue>Testis</tissue>
    </source>
</reference>
<reference key="3">
    <citation type="journal article" date="2004" name="Genome Res.">
        <title>The status, quality, and expansion of the NIH full-length cDNA project: the Mammalian Gene Collection (MGC).</title>
        <authorList>
            <consortium name="The MGC Project Team"/>
        </authorList>
    </citation>
    <scope>NUCLEOTIDE SEQUENCE [LARGE SCALE MRNA] (ISOFORM 1)</scope>
    <source>
        <tissue>Brain</tissue>
        <tissue>Skin</tissue>
    </source>
</reference>
<reference key="4">
    <citation type="submission" date="2009-01" db="UniProtKB">
        <authorList>
            <person name="Lubec G."/>
            <person name="Chen W.-Q."/>
        </authorList>
    </citation>
    <scope>PROTEIN SEQUENCE OF 45-52 AND 154-164</scope>
    <scope>IDENTIFICATION BY MASS SPECTROMETRY</scope>
    <source>
        <tissue>Fetal brain</tissue>
    </source>
</reference>
<reference key="5">
    <citation type="journal article" date="1999" name="Proc. Natl. Acad. Sci. U.S.A.">
        <title>Characterization of Sam68-like mammalian proteins SLM-1 and SLM-2: SLM-1 is a Src substrate during mitosis.</title>
        <authorList>
            <person name="Di Fruscio M."/>
            <person name="Chen T."/>
            <person name="Richard S."/>
        </authorList>
    </citation>
    <scope>TISSUE SPECIFICITY</scope>
    <source>
        <tissue>Brain</tissue>
    </source>
</reference>
<reference key="6">
    <citation type="journal article" date="2000" name="Hum. Mol. Genet.">
        <title>RBMY, a probable human spermatogenesis factor, and other hnRNP G proteins interact with Tra2beta and affect splicing.</title>
        <authorList>
            <person name="Venables J.P."/>
            <person name="Elliott D.J."/>
            <person name="Makarova O.V."/>
            <person name="Makarov E.M."/>
            <person name="Cooke H.J."/>
            <person name="Eperon E.C."/>
        </authorList>
    </citation>
    <scope>INTERACTION WITH RBMY1A1</scope>
    <source>
        <tissue>Testis</tissue>
    </source>
</reference>
<reference key="7">
    <citation type="journal article" date="2001" name="Cell Growth Differ.">
        <title>Down-regulation of T-STAR, a growth inhibitory protein, after SV40-mediated immortalization.</title>
        <authorList>
            <person name="Kool J."/>
            <person name="van Zaane W."/>
            <person name="van der Eb A.J."/>
            <person name="Terleth C."/>
        </authorList>
    </citation>
    <scope>INDUCTION</scope>
    <scope>MUTAGENESIS OF 327-LYS--TYR-346</scope>
</reference>
<reference key="8">
    <citation type="journal article" date="2002" name="J. Biol. Chem.">
        <title>A role for KH domain proteins (Sam68-like mammalian proteins and quaking proteins) in the post-transcriptional regulation of HIV replication.</title>
        <authorList>
            <person name="Reddy T.R."/>
            <person name="Suhasini M."/>
            <person name="Xu W."/>
            <person name="Yeh L.-Y."/>
            <person name="Yang J.-P."/>
            <person name="Wu J."/>
            <person name="Artzt K."/>
            <person name="Wong-Staal F."/>
        </authorList>
    </citation>
    <scope>FUNCTION</scope>
</reference>
<reference key="9">
    <citation type="journal article" date="2004" name="Hum. Mol. Genet.">
        <title>SIAH1 targets the alternative splicing factor T-STAR for degradation by the proteasome.</title>
        <authorList>
            <person name="Venables J.P."/>
            <person name="Dalgliesh C."/>
            <person name="Paronetto M.P."/>
            <person name="Skitt L."/>
            <person name="Thornton J.K."/>
            <person name="Saunders P.T."/>
            <person name="Sette C."/>
            <person name="Jones K.T."/>
            <person name="Elliott D.J."/>
        </authorList>
    </citation>
    <scope>INTERACTION WITH SIAH1</scope>
    <scope>DOMAIN</scope>
    <scope>MUTAGENESIS OF 212-ARG--PRO-251</scope>
</reference>
<reference key="10">
    <citation type="journal article" date="2005" name="J. Am. Soc. Nephrol.">
        <title>Sam68-like mammalian protein 2, identified by digital differential display as expressed by podocytes, is induced in proteinuria and involved in splice site selection of vascular endothelial growth factor.</title>
        <authorList>
            <person name="Cohen C.D."/>
            <person name="Doran P.P."/>
            <person name="Blattner S.M."/>
            <person name="Merkle M."/>
            <person name="Wang G.Q."/>
            <person name="Schmid H."/>
            <person name="Mathieson P.W."/>
            <person name="Saleem M.A."/>
            <person name="Henger A."/>
            <person name="Rastaldi M.P."/>
            <person name="Kretzler M."/>
        </authorList>
    </citation>
    <scope>SUBCELLULAR LOCATION</scope>
    <scope>INDUCTION</scope>
    <scope>FUNCTION</scope>
</reference>
<reference key="11">
    <citation type="journal article" date="2009" name="Nat. Biotechnol.">
        <title>Rapid and systematic analysis of the RNA recognition specificities of RNA-binding proteins.</title>
        <authorList>
            <person name="Ray D."/>
            <person name="Kazan H."/>
            <person name="Chan E.T."/>
            <person name="Pena Castillo L."/>
            <person name="Chaudhry S."/>
            <person name="Talukder S."/>
            <person name="Blencowe B.J."/>
            <person name="Morris Q."/>
            <person name="Hughes T.R."/>
        </authorList>
    </citation>
    <scope>RNA-BINDING</scope>
</reference>
<reference key="12">
    <citation type="journal article" date="2009" name="Science">
        <title>Lysine acetylation targets protein complexes and co-regulates major cellular functions.</title>
        <authorList>
            <person name="Choudhary C."/>
            <person name="Kumar C."/>
            <person name="Gnad F."/>
            <person name="Nielsen M.L."/>
            <person name="Rehman M."/>
            <person name="Walther T.C."/>
            <person name="Olsen J.V."/>
            <person name="Mann M."/>
        </authorList>
    </citation>
    <scope>IDENTIFICATION BY MASS SPECTROMETRY [LARGE SCALE ANALYSIS]</scope>
</reference>
<reference key="13">
    <citation type="journal article" date="2011" name="Oncol. Rep.">
        <title>SerpinB5 interacts with KHDRBS3 and FBXO32 in gastric cancer cells.</title>
        <authorList>
            <person name="Lei K.F."/>
            <person name="Liu B.Y."/>
            <person name="Wang Y.F."/>
            <person name="Chen X.H."/>
            <person name="Yu B.Q."/>
            <person name="Guo Y."/>
            <person name="Zhu Z.G."/>
        </authorList>
    </citation>
    <scope>INTERACTION WITH SERPINB5</scope>
</reference>
<reference key="14">
    <citation type="journal article" date="2017" name="Nat. Struct. Mol. Biol.">
        <title>Site-specific mapping of the human SUMO proteome reveals co-modification with phosphorylation.</title>
        <authorList>
            <person name="Hendriks I.A."/>
            <person name="Lyon D."/>
            <person name="Young C."/>
            <person name="Jensen L.J."/>
            <person name="Vertegaal A.C."/>
            <person name="Nielsen M.L."/>
        </authorList>
    </citation>
    <scope>SUMOYLATION [LARGE SCALE ANALYSIS] AT LYS-4</scope>
    <scope>IDENTIFICATION BY MASS SPECTROMETRY [LARGE SCALE ANALYSIS]</scope>
</reference>
<reference key="15">
    <citation type="journal article" date="2016" name="Nat. Commun.">
        <title>Structural basis of RNA recognition and dimerization by the STAR proteins T-STAR and Sam68.</title>
        <authorList>
            <person name="Feracci M."/>
            <person name="Foot J.N."/>
            <person name="Grellscheid S.N."/>
            <person name="Danilenko M."/>
            <person name="Stehle R."/>
            <person name="Gonchar O."/>
            <person name="Kang H.S."/>
            <person name="Dalgliesh C."/>
            <person name="Meyer N.H."/>
            <person name="Liu Y."/>
            <person name="Lahat A."/>
            <person name="Sattler M."/>
            <person name="Eperon I.C."/>
            <person name="Elliott D.J."/>
            <person name="Dominguez C."/>
        </authorList>
    </citation>
    <scope>X-RAY CRYSTALLOGRAPHY (1.59 ANGSTROMS) OF 1-183 IN COMPLEX WITH RNA SUBSTRATES</scope>
    <scope>FUNCTION</scope>
    <scope>MUTAGENESIS OF TYR-141</scope>
    <scope>SELF-ASSOCIATION</scope>
</reference>
<keyword id="KW-0002">3D-structure</keyword>
<keyword id="KW-0025">Alternative splicing</keyword>
<keyword id="KW-0903">Direct protein sequencing</keyword>
<keyword id="KW-0945">Host-virus interaction</keyword>
<keyword id="KW-1017">Isopeptide bond</keyword>
<keyword id="KW-0507">mRNA processing</keyword>
<keyword id="KW-0539">Nucleus</keyword>
<keyword id="KW-0597">Phosphoprotein</keyword>
<keyword id="KW-1267">Proteomics identification</keyword>
<keyword id="KW-1185">Reference proteome</keyword>
<keyword id="KW-0694">RNA-binding</keyword>
<keyword id="KW-0729">SH3-binding</keyword>
<keyword id="KW-0804">Transcription</keyword>
<keyword id="KW-0805">Transcription regulation</keyword>
<keyword id="KW-0832">Ubl conjugation</keyword>
<feature type="chain" id="PRO_0000232522" description="KH domain-containing, RNA-binding, signal transduction-associated protein 3">
    <location>
        <begin position="1"/>
        <end position="346"/>
    </location>
</feature>
<feature type="domain" description="KH">
    <location>
        <begin position="61"/>
        <end position="127"/>
    </location>
</feature>
<feature type="region of interest" description="Involved in homodimerization" evidence="14">
    <location>
        <begin position="1"/>
        <end position="160"/>
    </location>
</feature>
<feature type="region of interest" description="Interaction with SIAH1" evidence="10">
    <location>
        <begin position="212"/>
        <end position="251"/>
    </location>
</feature>
<feature type="region of interest" description="Disordered" evidence="3">
    <location>
        <begin position="213"/>
        <end position="267"/>
    </location>
</feature>
<feature type="region of interest" description="Disordered" evidence="3">
    <location>
        <begin position="318"/>
        <end position="346"/>
    </location>
</feature>
<feature type="compositionally biased region" description="Low complexity" evidence="3">
    <location>
        <begin position="213"/>
        <end position="228"/>
    </location>
</feature>
<feature type="compositionally biased region" description="Pro residues" evidence="3">
    <location>
        <begin position="253"/>
        <end position="262"/>
    </location>
</feature>
<feature type="cross-link" description="Glycyl lysine isopeptide (Lys-Gly) (interchain with G-Cter in SUMO2)" evidence="17">
    <location>
        <position position="4"/>
    </location>
</feature>
<feature type="splice variant" id="VSP_017905" description="In isoform 2." evidence="15">
    <original>DY</original>
    <variation>WC</variation>
    <location>
        <begin position="270"/>
        <end position="271"/>
    </location>
</feature>
<feature type="splice variant" id="VSP_017906" description="In isoform 2." evidence="15">
    <location>
        <begin position="272"/>
        <end position="346"/>
    </location>
</feature>
<feature type="mutagenesis site" description="Fails to influence alternative splicing of CD44, NRXN2 and NRXN3." evidence="14">
    <original>Y</original>
    <variation>E</variation>
    <location>
        <position position="141"/>
    </location>
</feature>
<feature type="mutagenesis site" description="Complete loss of SIAH1-mediated degradation." evidence="10">
    <location>
        <begin position="212"/>
        <end position="251"/>
    </location>
</feature>
<feature type="mutagenesis site" description="Complete loss of nuclear sublocalization." evidence="8">
    <location>
        <begin position="327"/>
        <end position="346"/>
    </location>
</feature>
<feature type="sequence conflict" description="In Ref. 3; AAH68536." evidence="16" ref="3">
    <location>
        <position position="41"/>
    </location>
</feature>
<feature type="helix" evidence="20">
    <location>
        <begin position="5"/>
        <end position="15"/>
    </location>
</feature>
<feature type="helix" evidence="20">
    <location>
        <begin position="21"/>
        <end position="35"/>
    </location>
</feature>
<feature type="turn" evidence="20">
    <location>
        <begin position="48"/>
        <end position="50"/>
    </location>
</feature>
<feature type="strand" evidence="18">
    <location>
        <begin position="54"/>
        <end position="61"/>
    </location>
</feature>
<feature type="turn" evidence="18">
    <location>
        <begin position="64"/>
        <end position="66"/>
    </location>
</feature>
<feature type="helix" evidence="18">
    <location>
        <begin position="72"/>
        <end position="77"/>
    </location>
</feature>
<feature type="helix" evidence="20">
    <location>
        <begin position="79"/>
        <end position="81"/>
    </location>
</feature>
<feature type="helix" evidence="18">
    <location>
        <begin position="83"/>
        <end position="91"/>
    </location>
</feature>
<feature type="strand" evidence="18">
    <location>
        <begin position="93"/>
        <end position="99"/>
    </location>
</feature>
<feature type="strand" evidence="19">
    <location>
        <begin position="102"/>
        <end position="104"/>
    </location>
</feature>
<feature type="helix" evidence="18">
    <location>
        <begin position="106"/>
        <end position="115"/>
    </location>
</feature>
<feature type="helix" evidence="18">
    <location>
        <begin position="118"/>
        <end position="124"/>
    </location>
</feature>
<feature type="strand" evidence="18">
    <location>
        <begin position="127"/>
        <end position="135"/>
    </location>
</feature>
<feature type="helix" evidence="18">
    <location>
        <begin position="137"/>
        <end position="151"/>
    </location>
</feature>
<feature type="helix" evidence="18">
    <location>
        <begin position="152"/>
        <end position="154"/>
    </location>
</feature>
<evidence type="ECO:0000250" key="1">
    <source>
        <dbReference type="UniProtKB" id="Q9JLP1"/>
    </source>
</evidence>
<evidence type="ECO:0000250" key="2">
    <source>
        <dbReference type="UniProtKB" id="Q9R226"/>
    </source>
</evidence>
<evidence type="ECO:0000256" key="3">
    <source>
        <dbReference type="SAM" id="MobiDB-lite"/>
    </source>
</evidence>
<evidence type="ECO:0000269" key="4">
    <source>
    </source>
</evidence>
<evidence type="ECO:0000269" key="5">
    <source>
    </source>
</evidence>
<evidence type="ECO:0000269" key="6">
    <source>
    </source>
</evidence>
<evidence type="ECO:0000269" key="7">
    <source>
    </source>
</evidence>
<evidence type="ECO:0000269" key="8">
    <source>
    </source>
</evidence>
<evidence type="ECO:0000269" key="9">
    <source>
    </source>
</evidence>
<evidence type="ECO:0000269" key="10">
    <source>
    </source>
</evidence>
<evidence type="ECO:0000269" key="11">
    <source>
    </source>
</evidence>
<evidence type="ECO:0000269" key="12">
    <source>
    </source>
</evidence>
<evidence type="ECO:0000269" key="13">
    <source>
    </source>
</evidence>
<evidence type="ECO:0000269" key="14">
    <source>
    </source>
</evidence>
<evidence type="ECO:0000303" key="15">
    <source>
    </source>
</evidence>
<evidence type="ECO:0000305" key="16"/>
<evidence type="ECO:0007744" key="17">
    <source>
    </source>
</evidence>
<evidence type="ECO:0007829" key="18">
    <source>
        <dbReference type="PDB" id="5EL3"/>
    </source>
</evidence>
<evidence type="ECO:0007829" key="19">
    <source>
        <dbReference type="PDB" id="5ELS"/>
    </source>
</evidence>
<evidence type="ECO:0007829" key="20">
    <source>
        <dbReference type="PDB" id="5ELT"/>
    </source>
</evidence>
<gene>
    <name type="primary">KHDRBS3</name>
    <name type="synonym">SALP</name>
    <name type="synonym">SLM2</name>
</gene>
<name>KHDR3_HUMAN</name>
<sequence>MEEKYLPELMAEKDSLDPSFTHALRLVNQEIEKFQKGEGKDEEKYIDVVINKNMKLGQKVLIPVKQFPKFNFVGKLLGPRGNSLKRLQEETLTKMSILGKGSMRDKAKEEELRKSGEAKYFHLNDDLHVLIEVFAPPAEAYARMGHALEEIKKFLIPDYNDEIRQAQLQELTYLNGGSENADVPVVRGKPTLRTRGVPAPAITRGRGGVTARPVGVVVPRGTPTPRGVLSTRGPVSRGRGLLTPRARGVPPTGYRPPPPPPTQETYGEYDYDDGYGTAYDEQSYDSYDNSYSTPAQSGADYYDYGHGLSEETYDSYGQEEWTNSRHKAPSARTAKGVYRDQPYGRY</sequence>
<organism>
    <name type="scientific">Homo sapiens</name>
    <name type="common">Human</name>
    <dbReference type="NCBI Taxonomy" id="9606"/>
    <lineage>
        <taxon>Eukaryota</taxon>
        <taxon>Metazoa</taxon>
        <taxon>Chordata</taxon>
        <taxon>Craniata</taxon>
        <taxon>Vertebrata</taxon>
        <taxon>Euteleostomi</taxon>
        <taxon>Mammalia</taxon>
        <taxon>Eutheria</taxon>
        <taxon>Euarchontoglires</taxon>
        <taxon>Primates</taxon>
        <taxon>Haplorrhini</taxon>
        <taxon>Catarrhini</taxon>
        <taxon>Hominidae</taxon>
        <taxon>Homo</taxon>
    </lineage>
</organism>
<comment type="function">
    <text evidence="1 2 6 11 12 14">RNA-binding protein that plays a role in the regulation of alternative splicing and influences mRNA splice site selection and exon inclusion. Binds preferentially to the 5'-[AU]UAAA-3' motif in vitro. Binds optimally to RNA containing 5'-[AU]UAA-3' as a bipartite motif spaced by more than 15 nucleotides. Binds poly(A). RNA-binding abilities are down-regulated by tyrosine kinase PTK6 (PubMed:10564820, PubMed:19561594, PubMed:26758068). Involved in splice site selection of vascular endothelial growth factor (PubMed:15901763). In vitro regulates CD44 alternative splicing by direct binding to purine-rich exonic enhancer (By similarity). Can regulate alternative splicing of neurexins NRXN1-3 in the laminin G-like domain 6 containing the evolutionary conserved neurexin alternative spliced segment 4 (AS4) involved in neurexin selective targeting to postsynaptic partners such as neuroligins and LRRTM family members (PubMed:26758068). Targeted, cell-type specific splicing regulation of NRXN1 at AS4 is involved in neuronal glutamatergic synapse function and plasticity (By similarity). May regulate expression of KHDRBS2/SLIM-1 in defined brain neuron populations by modifying its alternative splicing (By similarity). Can bind FABP9 mRNA (By similarity). May play a role as a negative regulator of cell growth. Inhibits cell proliferation.</text>
</comment>
<comment type="function">
    <text evidence="9">(Microbial infection) Involved in post-transcriptional regulation of HIV-1 gene expression.</text>
</comment>
<comment type="subunit">
    <text evidence="1 2 5 6 7 10 13">Self-associates to form homooligomers; dimerization increases RNA affinity (PubMed:26758068). Interacts with KHDRBS2/SLM-1 (By similarity). Interacts with KHDRBS1/SAM68; heterooligomer formation of KHDRBS family proteins may modulate RNA substrate specificity (PubMed:10332027). Interacts with the splicing regulatory proteins SFRS9, SAFB and YTHDC1. Interacts with HNRPL (By similarity). Interacts with RBMX, RBMY1A1, p85 subunit of PI3-kinase, SERPINB5 (PubMed:10332027, PubMed:10564820, PubMed:10749975, PubMed:21725612). Interacts with SIAH1 which promotes targeting for degradation (PubMed:15163637).</text>
</comment>
<comment type="interaction">
    <interactant intactId="EBI-722504">
        <id>O75525</id>
    </interactant>
    <interactant intactId="EBI-745213">
        <id>P29972</id>
        <label>AQP1</label>
    </interactant>
    <organismsDiffer>false</organismsDiffer>
    <experiments>3</experiments>
</comment>
<comment type="interaction">
    <interactant intactId="EBI-722504">
        <id>O75525</id>
    </interactant>
    <interactant intactId="EBI-742750">
        <id>Q8TBE0</id>
        <label>BAHD1</label>
    </interactant>
    <organismsDiffer>false</organismsDiffer>
    <experiments>4</experiments>
</comment>
<comment type="interaction">
    <interactant intactId="EBI-722504">
        <id>O75525</id>
    </interactant>
    <interactant intactId="EBI-741032">
        <id>Q8NE01</id>
        <label>CNNM3</label>
    </interactant>
    <organismsDiffer>false</organismsDiffer>
    <experiments>3</experiments>
</comment>
<comment type="interaction">
    <interactant intactId="EBI-722504">
        <id>O75525</id>
    </interactant>
    <interactant intactId="EBI-9679045">
        <id>Q9NQL9</id>
        <label>DMRT3</label>
    </interactant>
    <organismsDiffer>false</organismsDiffer>
    <experiments>3</experiments>
</comment>
<comment type="interaction">
    <interactant intactId="EBI-722504">
        <id>O75525</id>
    </interactant>
    <interactant intactId="EBI-448771">
        <id>Q92608</id>
        <label>DOCK2</label>
    </interactant>
    <organismsDiffer>false</organismsDiffer>
    <experiments>3</experiments>
</comment>
<comment type="interaction">
    <interactant intactId="EBI-722504">
        <id>O75525</id>
    </interactant>
    <interactant intactId="EBI-719843">
        <id>P02008</id>
        <label>HBZ</label>
    </interactant>
    <organismsDiffer>false</organismsDiffer>
    <experiments>3</experiments>
</comment>
<comment type="interaction">
    <interactant intactId="EBI-722504">
        <id>O75525</id>
    </interactant>
    <interactant intactId="EBI-7060731">
        <id>P61978-2</id>
        <label>HNRNPK</label>
    </interactant>
    <organismsDiffer>false</organismsDiffer>
    <experiments>3</experiments>
</comment>
<comment type="interaction">
    <interactant intactId="EBI-722504">
        <id>O75525</id>
    </interactant>
    <interactant intactId="EBI-1380477">
        <id>Q92835</id>
        <label>INPP5D</label>
    </interactant>
    <organismsDiffer>false</organismsDiffer>
    <experiments>3</experiments>
</comment>
<comment type="interaction">
    <interactant intactId="EBI-722504">
        <id>O75525</id>
    </interactant>
    <interactant intactId="EBI-9092209">
        <id>Q92835-2</id>
        <label>INPP5D</label>
    </interactant>
    <organismsDiffer>false</organismsDiffer>
    <experiments>3</experiments>
</comment>
<comment type="interaction">
    <interactant intactId="EBI-722504">
        <id>O75525</id>
    </interactant>
    <interactant intactId="EBI-1364">
        <id>Q07666</id>
        <label>KHDRBS1</label>
    </interactant>
    <organismsDiffer>false</organismsDiffer>
    <experiments>3</experiments>
</comment>
<comment type="interaction">
    <interactant intactId="EBI-722504">
        <id>O75525</id>
    </interactant>
    <interactant intactId="EBI-742808">
        <id>Q5VWX1</id>
        <label>KHDRBS2</label>
    </interactant>
    <organismsDiffer>false</organismsDiffer>
    <experiments>6</experiments>
</comment>
<comment type="interaction">
    <interactant intactId="EBI-722504">
        <id>O75525</id>
    </interactant>
    <interactant intactId="EBI-12028858">
        <id>Q8IXW0</id>
        <label>LMNTD2</label>
    </interactant>
    <organismsDiffer>false</organismsDiffer>
    <experiments>3</experiments>
</comment>
<comment type="interaction">
    <interactant intactId="EBI-722504">
        <id>O75525</id>
    </interactant>
    <interactant intactId="EBI-10250211">
        <id>Q6IPE9</id>
        <label>MARK4</label>
    </interactant>
    <organismsDiffer>false</organismsDiffer>
    <experiments>3</experiments>
</comment>
<comment type="interaction">
    <interactant intactId="EBI-722504">
        <id>O75525</id>
    </interactant>
    <interactant intactId="EBI-14086479">
        <id>Q8IVT4</id>
        <label>MGC50722</label>
    </interactant>
    <organismsDiffer>false</organismsDiffer>
    <experiments>3</experiments>
</comment>
<comment type="interaction">
    <interactant intactId="EBI-722504">
        <id>O75525</id>
    </interactant>
    <interactant intactId="EBI-2858213">
        <id>Q86VE0</id>
        <label>MYPOP</label>
    </interactant>
    <organismsDiffer>false</organismsDiffer>
    <experiments>3</experiments>
</comment>
<comment type="interaction">
    <interactant intactId="EBI-722504">
        <id>O75525</id>
    </interactant>
    <interactant intactId="EBI-347721">
        <id>Q8WX92</id>
        <label>NELFB</label>
    </interactant>
    <organismsDiffer>false</organismsDiffer>
    <experiments>2</experiments>
</comment>
<comment type="interaction">
    <interactant intactId="EBI-722504">
        <id>O75525</id>
    </interactant>
    <interactant intactId="EBI-10329013">
        <id>Q9Y5E9</id>
        <label>PCDHB14</label>
    </interactant>
    <organismsDiffer>false</organismsDiffer>
    <experiments>3</experiments>
</comment>
<comment type="interaction">
    <interactant intactId="EBI-722504">
        <id>O75525</id>
    </interactant>
    <interactant intactId="EBI-1567797">
        <id>Q8WWY3</id>
        <label>PRPF31</label>
    </interactant>
    <organismsDiffer>false</organismsDiffer>
    <experiments>6</experiments>
</comment>
<comment type="interaction">
    <interactant intactId="EBI-722504">
        <id>O75525</id>
    </interactant>
    <interactant intactId="EBI-2803328">
        <id>P79522</id>
        <label>PRR3</label>
    </interactant>
    <organismsDiffer>false</organismsDiffer>
    <experiments>3</experiments>
</comment>
<comment type="interaction">
    <interactant intactId="EBI-722504">
        <id>O75525</id>
    </interactant>
    <interactant intactId="EBI-359352">
        <id>P25786</id>
        <label>PSMA1</label>
    </interactant>
    <organismsDiffer>false</organismsDiffer>
    <experiments>3</experiments>
</comment>
<comment type="interaction">
    <interactant intactId="EBI-722504">
        <id>O75525</id>
    </interactant>
    <interactant intactId="EBI-3437896">
        <id>Q86YV0</id>
        <label>RASAL3</label>
    </interactant>
    <organismsDiffer>false</organismsDiffer>
    <experiments>3</experiments>
</comment>
<comment type="interaction">
    <interactant intactId="EBI-722504">
        <id>O75525</id>
    </interactant>
    <interactant intactId="EBI-740818">
        <id>Q9Y272</id>
        <label>RASD1</label>
    </interactant>
    <organismsDiffer>false</organismsDiffer>
    <experiments>3</experiments>
</comment>
<comment type="interaction">
    <interactant intactId="EBI-722504">
        <id>O75525</id>
    </interactant>
    <interactant intactId="EBI-2949699">
        <id>P98179</id>
        <label>RBM3</label>
    </interactant>
    <organismsDiffer>false</organismsDiffer>
    <experiments>3</experiments>
</comment>
<comment type="interaction">
    <interactant intactId="EBI-722504">
        <id>O75525</id>
    </interactant>
    <interactant intactId="EBI-743526">
        <id>P38159</id>
        <label>RBMX</label>
    </interactant>
    <organismsDiffer>false</organismsDiffer>
    <experiments>4</experiments>
</comment>
<comment type="interaction">
    <interactant intactId="EBI-722504">
        <id>O75525</id>
    </interactant>
    <interactant intactId="EBI-1055010">
        <id>P40938</id>
        <label>RFC3</label>
    </interactant>
    <organismsDiffer>false</organismsDiffer>
    <experiments>3</experiments>
</comment>
<comment type="interaction">
    <interactant intactId="EBI-722504">
        <id>O75525</id>
    </interactant>
    <interactant intactId="EBI-2855824">
        <id>Q9UNE2</id>
        <label>RPH3AL</label>
    </interactant>
    <organismsDiffer>false</organismsDiffer>
    <experiments>3</experiments>
</comment>
<comment type="interaction">
    <interactant intactId="EBI-722504">
        <id>O75525</id>
    </interactant>
    <interactant intactId="EBI-1752330">
        <id>Q9BYB0</id>
        <label>SHANK3</label>
    </interactant>
    <organismsDiffer>false</organismsDiffer>
    <experiments>3</experiments>
</comment>
<comment type="interaction">
    <interactant intactId="EBI-722504">
        <id>O75525</id>
    </interactant>
    <interactant intactId="EBI-298169">
        <id>Q96RF0</id>
        <label>SNX18</label>
    </interactant>
    <organismsDiffer>false</organismsDiffer>
    <experiments>3</experiments>
</comment>
<comment type="interaction">
    <interactant intactId="EBI-722504">
        <id>O75525</id>
    </interactant>
    <interactant intactId="EBI-10241197">
        <id>Q3SY00</id>
        <label>TSGA10IP</label>
    </interactant>
    <organismsDiffer>false</organismsDiffer>
    <experiments>3</experiments>
</comment>
<comment type="interaction">
    <interactant intactId="EBI-722504">
        <id>O75525</id>
    </interactant>
    <interactant intactId="EBI-1383454">
        <id>P29597</id>
        <label>TYK2</label>
    </interactant>
    <organismsDiffer>false</organismsDiffer>
    <experiments>3</experiments>
</comment>
<comment type="interaction">
    <interactant intactId="EBI-722504">
        <id>O75525</id>
    </interactant>
    <interactant intactId="EBI-2849854">
        <id>Q96MU7</id>
        <label>YTHDC1</label>
    </interactant>
    <organismsDiffer>false</organismsDiffer>
    <experiments>6</experiments>
</comment>
<comment type="interaction">
    <interactant intactId="EBI-722504">
        <id>O75525</id>
    </interactant>
    <interactant intactId="EBI-2560158">
        <id>Q5BKZ1</id>
        <label>ZNF326</label>
    </interactant>
    <organismsDiffer>false</organismsDiffer>
    <experiments>3</experiments>
</comment>
<comment type="interaction">
    <interactant intactId="EBI-722504">
        <id>O75525</id>
    </interactant>
    <interactant intactId="EBI-347633">
        <id>Q9H9D4</id>
        <label>ZNF408</label>
    </interactant>
    <organismsDiffer>false</organismsDiffer>
    <experiments>4</experiments>
</comment>
<comment type="interaction">
    <interactant intactId="EBI-722504">
        <id>O75525</id>
    </interactant>
    <interactant intactId="EBI-14069183">
        <id>Q86XF7</id>
        <label>ZNF575</label>
    </interactant>
    <organismsDiffer>false</organismsDiffer>
    <experiments>3</experiments>
</comment>
<comment type="interaction">
    <interactant intactId="EBI-722504">
        <id>O75525</id>
    </interactant>
    <interactant intactId="EBI-746277">
        <id>Q9UK33</id>
        <label>ZNF580</label>
    </interactant>
    <organismsDiffer>false</organismsDiffer>
    <experiments>3</experiments>
</comment>
<comment type="interaction">
    <interactant intactId="EBI-722504">
        <id>O75525</id>
    </interactant>
    <interactant intactId="EBI-16429014">
        <id>A0A0S2Z5X4</id>
        <label>ZNF688</label>
    </interactant>
    <organismsDiffer>false</organismsDiffer>
    <experiments>3</experiments>
</comment>
<comment type="subcellular location">
    <subcellularLocation>
        <location evidence="5 11">Nucleus</location>
    </subcellularLocation>
    <text>Localized in a compartment adjacent to the nucleolus, but distinct from the peri-nucleolar one.</text>
</comment>
<comment type="alternative products">
    <event type="alternative splicing"/>
    <isoform>
        <id>O75525-1</id>
        <name>1</name>
        <name>SALP-alpha</name>
        <sequence type="displayed"/>
    </isoform>
    <isoform>
        <id>O75525-2</id>
        <name>2</name>
        <name>SALP-beta</name>
        <sequence type="described" ref="VSP_017905 VSP_017906"/>
    </isoform>
</comment>
<comment type="tissue specificity">
    <text evidence="4 5 6">Ubiquitous with higher expression in testis, skeletal muscle and brain. Expressed in the kidney only in podocytes, the glomerular epithelial cells of the kidney. Strongly expressed after meiosis.</text>
</comment>
<comment type="induction">
    <text evidence="8 11">Induced in proteinuric diseases. Down-regulated in immortalized fibroblasts isolated after a proliferative crisis accompanied with massive cell death.</text>
</comment>
<comment type="domain">
    <text evidence="6">The proline-rich site binds the SH3 domain of the p85 subunit of PI3-kinase.</text>
</comment>
<comment type="PTM">
    <text evidence="6">Phosphorylated on tyrosine residues. Isoform 1 C-terminal region is tyrosine-rich, but isoform 2 lacking this C-terminal region is also tyrosine-phosphorylated.</text>
</comment>
<comment type="similarity">
    <text evidence="16">Belongs to the KHDRBS family.</text>
</comment>
<proteinExistence type="evidence at protein level"/>
<dbReference type="EMBL" id="AF051321">
    <property type="protein sequence ID" value="AAC99294.1"/>
    <property type="molecule type" value="mRNA"/>
</dbReference>
<dbReference type="EMBL" id="AF051322">
    <property type="protein sequence ID" value="AAC99295.1"/>
    <property type="molecule type" value="mRNA"/>
</dbReference>
<dbReference type="EMBL" id="AF069681">
    <property type="protein sequence ID" value="AAC24857.1"/>
    <property type="molecule type" value="mRNA"/>
</dbReference>
<dbReference type="EMBL" id="BC032606">
    <property type="protein sequence ID" value="AAH32606.1"/>
    <property type="molecule type" value="mRNA"/>
</dbReference>
<dbReference type="EMBL" id="BC068536">
    <property type="protein sequence ID" value="AAH68536.1"/>
    <property type="molecule type" value="mRNA"/>
</dbReference>
<dbReference type="CCDS" id="CCDS6374.1">
    <molecule id="O75525-1"/>
</dbReference>
<dbReference type="RefSeq" id="NP_006549.1">
    <molecule id="O75525-1"/>
    <property type="nucleotide sequence ID" value="NM_006558.3"/>
</dbReference>
<dbReference type="PDB" id="5EL3">
    <property type="method" value="X-ray"/>
    <property type="resolution" value="1.59 A"/>
    <property type="chains" value="A/B/C/D=50-160"/>
</dbReference>
<dbReference type="PDB" id="5ELR">
    <property type="method" value="X-ray"/>
    <property type="resolution" value="2.30 A"/>
    <property type="chains" value="C/D=50-183"/>
</dbReference>
<dbReference type="PDB" id="5ELS">
    <property type="method" value="X-ray"/>
    <property type="resolution" value="2.87 A"/>
    <property type="chains" value="A/B/C/D/E/F=50-160"/>
</dbReference>
<dbReference type="PDB" id="5ELT">
    <property type="method" value="X-ray"/>
    <property type="resolution" value="2.13 A"/>
    <property type="chains" value="A/B=1-160"/>
</dbReference>
<dbReference type="PDB" id="5EMO">
    <property type="method" value="X-ray"/>
    <property type="resolution" value="3.03 A"/>
    <property type="chains" value="A/B=1-183"/>
</dbReference>
<dbReference type="PDBsum" id="5EL3"/>
<dbReference type="PDBsum" id="5ELR"/>
<dbReference type="PDBsum" id="5ELS"/>
<dbReference type="PDBsum" id="5ELT"/>
<dbReference type="PDBsum" id="5EMO"/>
<dbReference type="SMR" id="O75525"/>
<dbReference type="BioGRID" id="115899">
    <property type="interactions" value="97"/>
</dbReference>
<dbReference type="FunCoup" id="O75525">
    <property type="interactions" value="1266"/>
</dbReference>
<dbReference type="IntAct" id="O75525">
    <property type="interactions" value="77"/>
</dbReference>
<dbReference type="MINT" id="O75525"/>
<dbReference type="STRING" id="9606.ENSP00000348108"/>
<dbReference type="GlyGen" id="O75525">
    <property type="glycosylation" value="3 sites, 1 O-linked glycan (1 site)"/>
</dbReference>
<dbReference type="iPTMnet" id="O75525"/>
<dbReference type="PhosphoSitePlus" id="O75525"/>
<dbReference type="BioMuta" id="KHDRBS3"/>
<dbReference type="jPOST" id="O75525"/>
<dbReference type="MassIVE" id="O75525"/>
<dbReference type="PaxDb" id="9606-ENSP00000348108"/>
<dbReference type="PeptideAtlas" id="O75525"/>
<dbReference type="ProteomicsDB" id="50061">
    <molecule id="O75525-1"/>
</dbReference>
<dbReference type="ProteomicsDB" id="50062">
    <molecule id="O75525-2"/>
</dbReference>
<dbReference type="Pumba" id="O75525"/>
<dbReference type="TopDownProteomics" id="O75525-2">
    <molecule id="O75525-2"/>
</dbReference>
<dbReference type="Antibodypedia" id="612">
    <property type="antibodies" value="197 antibodies from 28 providers"/>
</dbReference>
<dbReference type="DNASU" id="10656"/>
<dbReference type="Ensembl" id="ENST00000355849.10">
    <molecule id="O75525-1"/>
    <property type="protein sequence ID" value="ENSP00000348108.5"/>
    <property type="gene ID" value="ENSG00000131773.15"/>
</dbReference>
<dbReference type="GeneID" id="10656"/>
<dbReference type="KEGG" id="hsa:10656"/>
<dbReference type="MANE-Select" id="ENST00000355849.10">
    <property type="protein sequence ID" value="ENSP00000348108.5"/>
    <property type="RefSeq nucleotide sequence ID" value="NM_006558.3"/>
    <property type="RefSeq protein sequence ID" value="NP_006549.1"/>
</dbReference>
<dbReference type="UCSC" id="uc003yuv.4">
    <molecule id="O75525-1"/>
    <property type="organism name" value="human"/>
</dbReference>
<dbReference type="AGR" id="HGNC:18117"/>
<dbReference type="CTD" id="10656"/>
<dbReference type="DisGeNET" id="10656"/>
<dbReference type="GeneCards" id="KHDRBS3"/>
<dbReference type="HGNC" id="HGNC:18117">
    <property type="gene designation" value="KHDRBS3"/>
</dbReference>
<dbReference type="HPA" id="ENSG00000131773">
    <property type="expression patterns" value="Tissue enhanced (testis)"/>
</dbReference>
<dbReference type="MIM" id="610421">
    <property type="type" value="gene"/>
</dbReference>
<dbReference type="neXtProt" id="NX_O75525"/>
<dbReference type="OpenTargets" id="ENSG00000131773"/>
<dbReference type="PharmGKB" id="PA30094"/>
<dbReference type="VEuPathDB" id="HostDB:ENSG00000131773"/>
<dbReference type="eggNOG" id="KOG1588">
    <property type="taxonomic scope" value="Eukaryota"/>
</dbReference>
<dbReference type="GeneTree" id="ENSGT00940000157280"/>
<dbReference type="HOGENOM" id="CLU_034976_0_0_1"/>
<dbReference type="InParanoid" id="O75525"/>
<dbReference type="OMA" id="SYREQPY"/>
<dbReference type="OrthoDB" id="6777263at2759"/>
<dbReference type="PAN-GO" id="O75525">
    <property type="GO annotations" value="3 GO annotations based on evolutionary models"/>
</dbReference>
<dbReference type="PhylomeDB" id="O75525"/>
<dbReference type="TreeFam" id="TF314878"/>
<dbReference type="PathwayCommons" id="O75525"/>
<dbReference type="Reactome" id="R-HSA-8849468">
    <property type="pathway name" value="PTK6 Regulates Proteins Involved in RNA Processing"/>
</dbReference>
<dbReference type="SignaLink" id="O75525"/>
<dbReference type="SIGNOR" id="O75525"/>
<dbReference type="BioGRID-ORCS" id="10656">
    <property type="hits" value="11 hits in 1151 CRISPR screens"/>
</dbReference>
<dbReference type="CD-CODE" id="62EA6512">
    <property type="entry name" value="Sam68 nuclear body"/>
</dbReference>
<dbReference type="CD-CODE" id="91857CE7">
    <property type="entry name" value="Nucleolus"/>
</dbReference>
<dbReference type="CD-CODE" id="DEE660B4">
    <property type="entry name" value="Stress granule"/>
</dbReference>
<dbReference type="ChiTaRS" id="KHDRBS3">
    <property type="organism name" value="human"/>
</dbReference>
<dbReference type="EvolutionaryTrace" id="O75525"/>
<dbReference type="GeneWiki" id="KHDRBS3"/>
<dbReference type="GenomeRNAi" id="10656"/>
<dbReference type="Pharos" id="O75525">
    <property type="development level" value="Tbio"/>
</dbReference>
<dbReference type="PRO" id="PR:O75525"/>
<dbReference type="Proteomes" id="UP000005640">
    <property type="component" value="Chromosome 8"/>
</dbReference>
<dbReference type="RNAct" id="O75525">
    <property type="molecule type" value="protein"/>
</dbReference>
<dbReference type="Bgee" id="ENSG00000131773">
    <property type="expression patterns" value="Expressed in cortical plate and 190 other cell types or tissues"/>
</dbReference>
<dbReference type="ExpressionAtlas" id="O75525">
    <property type="expression patterns" value="baseline and differential"/>
</dbReference>
<dbReference type="GO" id="GO:0005654">
    <property type="term" value="C:nucleoplasm"/>
    <property type="evidence" value="ECO:0000314"/>
    <property type="project" value="HPA"/>
</dbReference>
<dbReference type="GO" id="GO:0005634">
    <property type="term" value="C:nucleus"/>
    <property type="evidence" value="ECO:0000315"/>
    <property type="project" value="UniProtKB"/>
</dbReference>
<dbReference type="GO" id="GO:0032991">
    <property type="term" value="C:protein-containing complex"/>
    <property type="evidence" value="ECO:0000314"/>
    <property type="project" value="UniProtKB"/>
</dbReference>
<dbReference type="GO" id="GO:0042802">
    <property type="term" value="F:identical protein binding"/>
    <property type="evidence" value="ECO:0000314"/>
    <property type="project" value="UniProtKB"/>
</dbReference>
<dbReference type="GO" id="GO:0003729">
    <property type="term" value="F:mRNA binding"/>
    <property type="evidence" value="ECO:0000318"/>
    <property type="project" value="GO_Central"/>
</dbReference>
<dbReference type="GO" id="GO:0019904">
    <property type="term" value="F:protein domain specific binding"/>
    <property type="evidence" value="ECO:0000353"/>
    <property type="project" value="UniProtKB"/>
</dbReference>
<dbReference type="GO" id="GO:0003723">
    <property type="term" value="F:RNA binding"/>
    <property type="evidence" value="ECO:0000314"/>
    <property type="project" value="UniProtKB"/>
</dbReference>
<dbReference type="GO" id="GO:0017124">
    <property type="term" value="F:SH3 domain binding"/>
    <property type="evidence" value="ECO:0007669"/>
    <property type="project" value="UniProtKB-KW"/>
</dbReference>
<dbReference type="GO" id="GO:0006397">
    <property type="term" value="P:mRNA processing"/>
    <property type="evidence" value="ECO:0007669"/>
    <property type="project" value="UniProtKB-KW"/>
</dbReference>
<dbReference type="GO" id="GO:0000381">
    <property type="term" value="P:regulation of alternative mRNA splicing, via spliceosome"/>
    <property type="evidence" value="ECO:0000318"/>
    <property type="project" value="GO_Central"/>
</dbReference>
<dbReference type="CDD" id="cd22470">
    <property type="entry name" value="KH-I_KHDRBS3"/>
    <property type="match status" value="1"/>
</dbReference>
<dbReference type="FunFam" id="3.30.1370.10:FF:000030">
    <property type="entry name" value="KH domain-containing, RNA-binding, signal transduction-associated protein 3 isoformX2"/>
    <property type="match status" value="1"/>
</dbReference>
<dbReference type="Gene3D" id="3.30.1370.10">
    <property type="entry name" value="K Homology domain, type 1"/>
    <property type="match status" value="1"/>
</dbReference>
<dbReference type="InterPro" id="IPR045071">
    <property type="entry name" value="BBP-like"/>
</dbReference>
<dbReference type="InterPro" id="IPR055256">
    <property type="entry name" value="KH_1_KHDC4/BBP-like"/>
</dbReference>
<dbReference type="InterPro" id="IPR004087">
    <property type="entry name" value="KH_dom"/>
</dbReference>
<dbReference type="InterPro" id="IPR036612">
    <property type="entry name" value="KH_dom_type_1_sf"/>
</dbReference>
<dbReference type="InterPro" id="IPR032571">
    <property type="entry name" value="Qua1_dom"/>
</dbReference>
<dbReference type="InterPro" id="IPR032335">
    <property type="entry name" value="Sam68-YY"/>
</dbReference>
<dbReference type="PANTHER" id="PTHR11208:SF29">
    <property type="entry name" value="KH DOMAIN-CONTAINING, RNA-BINDING, SIGNAL TRANSDUCTION-ASSOCIATED PROTEIN 3"/>
    <property type="match status" value="1"/>
</dbReference>
<dbReference type="PANTHER" id="PTHR11208">
    <property type="entry name" value="RNA-BINDING PROTEIN RELATED"/>
    <property type="match status" value="1"/>
</dbReference>
<dbReference type="Pfam" id="PF22675">
    <property type="entry name" value="KH-I_KHDC4-BBP"/>
    <property type="match status" value="1"/>
</dbReference>
<dbReference type="Pfam" id="PF16274">
    <property type="entry name" value="Qua1"/>
    <property type="match status" value="1"/>
</dbReference>
<dbReference type="Pfam" id="PF16568">
    <property type="entry name" value="Sam68-YY"/>
    <property type="match status" value="1"/>
</dbReference>
<dbReference type="SMART" id="SM00322">
    <property type="entry name" value="KH"/>
    <property type="match status" value="1"/>
</dbReference>
<dbReference type="SUPFAM" id="SSF54791">
    <property type="entry name" value="Eukaryotic type KH-domain (KH-domain type I)"/>
    <property type="match status" value="1"/>
</dbReference>
<accession>O75525</accession>
<accession>Q6NUL8</accession>
<accession>Q9UPA8</accession>
<protein>
    <recommendedName>
        <fullName>KH domain-containing, RNA-binding, signal transduction-associated protein 3</fullName>
    </recommendedName>
    <alternativeName>
        <fullName>RNA-binding protein T-Star</fullName>
    </alternativeName>
    <alternativeName>
        <fullName>Sam68-like mammalian protein 2</fullName>
        <shortName>SLM-2</shortName>
    </alternativeName>
    <alternativeName>
        <fullName>Sam68-like phosphotyrosine protein</fullName>
    </alternativeName>
</protein>